<accession>B3W7G1</accession>
<organism>
    <name type="scientific">Lacticaseibacillus casei (strain BL23)</name>
    <name type="common">Lactobacillus casei</name>
    <dbReference type="NCBI Taxonomy" id="543734"/>
    <lineage>
        <taxon>Bacteria</taxon>
        <taxon>Bacillati</taxon>
        <taxon>Bacillota</taxon>
        <taxon>Bacilli</taxon>
        <taxon>Lactobacillales</taxon>
        <taxon>Lactobacillaceae</taxon>
        <taxon>Lacticaseibacillus</taxon>
    </lineage>
</organism>
<reference key="1">
    <citation type="submission" date="2008-06" db="EMBL/GenBank/DDBJ databases">
        <title>Lactobacillus casei BL23 complete genome sequence.</title>
        <authorList>
            <person name="Maze A."/>
            <person name="Boel G."/>
            <person name="Bourand A."/>
            <person name="Loux V."/>
            <person name="Gibrat J.F."/>
            <person name="Zuniga M."/>
            <person name="Hartke A."/>
            <person name="Deutscher J."/>
        </authorList>
    </citation>
    <scope>NUCLEOTIDE SEQUENCE [LARGE SCALE GENOMIC DNA]</scope>
    <source>
        <strain>BL23</strain>
    </source>
</reference>
<name>PURA_LACCB</name>
<feature type="chain" id="PRO_1000089307" description="Adenylosuccinate synthetase">
    <location>
        <begin position="1"/>
        <end position="431"/>
    </location>
</feature>
<feature type="active site" description="Proton acceptor" evidence="1">
    <location>
        <position position="13"/>
    </location>
</feature>
<feature type="active site" description="Proton donor" evidence="1">
    <location>
        <position position="41"/>
    </location>
</feature>
<feature type="binding site" evidence="1">
    <location>
        <begin position="12"/>
        <end position="18"/>
    </location>
    <ligand>
        <name>GTP</name>
        <dbReference type="ChEBI" id="CHEBI:37565"/>
    </ligand>
</feature>
<feature type="binding site" description="in other chain" evidence="1">
    <location>
        <begin position="13"/>
        <end position="16"/>
    </location>
    <ligand>
        <name>IMP</name>
        <dbReference type="ChEBI" id="CHEBI:58053"/>
        <note>ligand shared between dimeric partners</note>
    </ligand>
</feature>
<feature type="binding site" evidence="1">
    <location>
        <position position="13"/>
    </location>
    <ligand>
        <name>Mg(2+)</name>
        <dbReference type="ChEBI" id="CHEBI:18420"/>
    </ligand>
</feature>
<feature type="binding site" description="in other chain" evidence="1">
    <location>
        <begin position="38"/>
        <end position="41"/>
    </location>
    <ligand>
        <name>IMP</name>
        <dbReference type="ChEBI" id="CHEBI:58053"/>
        <note>ligand shared between dimeric partners</note>
    </ligand>
</feature>
<feature type="binding site" evidence="1">
    <location>
        <begin position="40"/>
        <end position="42"/>
    </location>
    <ligand>
        <name>GTP</name>
        <dbReference type="ChEBI" id="CHEBI:37565"/>
    </ligand>
</feature>
<feature type="binding site" evidence="1">
    <location>
        <position position="40"/>
    </location>
    <ligand>
        <name>Mg(2+)</name>
        <dbReference type="ChEBI" id="CHEBI:18420"/>
    </ligand>
</feature>
<feature type="binding site" description="in other chain" evidence="1">
    <location>
        <position position="128"/>
    </location>
    <ligand>
        <name>IMP</name>
        <dbReference type="ChEBI" id="CHEBI:58053"/>
        <note>ligand shared between dimeric partners</note>
    </ligand>
</feature>
<feature type="binding site" evidence="1">
    <location>
        <position position="142"/>
    </location>
    <ligand>
        <name>IMP</name>
        <dbReference type="ChEBI" id="CHEBI:58053"/>
        <note>ligand shared between dimeric partners</note>
    </ligand>
</feature>
<feature type="binding site" description="in other chain" evidence="1">
    <location>
        <position position="223"/>
    </location>
    <ligand>
        <name>IMP</name>
        <dbReference type="ChEBI" id="CHEBI:58053"/>
        <note>ligand shared between dimeric partners</note>
    </ligand>
</feature>
<feature type="binding site" description="in other chain" evidence="1">
    <location>
        <position position="238"/>
    </location>
    <ligand>
        <name>IMP</name>
        <dbReference type="ChEBI" id="CHEBI:58053"/>
        <note>ligand shared between dimeric partners</note>
    </ligand>
</feature>
<feature type="binding site" evidence="1">
    <location>
        <begin position="297"/>
        <end position="303"/>
    </location>
    <ligand>
        <name>substrate</name>
    </ligand>
</feature>
<feature type="binding site" description="in other chain" evidence="1">
    <location>
        <position position="301"/>
    </location>
    <ligand>
        <name>IMP</name>
        <dbReference type="ChEBI" id="CHEBI:58053"/>
        <note>ligand shared between dimeric partners</note>
    </ligand>
</feature>
<feature type="binding site" evidence="1">
    <location>
        <position position="303"/>
    </location>
    <ligand>
        <name>GTP</name>
        <dbReference type="ChEBI" id="CHEBI:37565"/>
    </ligand>
</feature>
<feature type="binding site" evidence="1">
    <location>
        <begin position="329"/>
        <end position="331"/>
    </location>
    <ligand>
        <name>GTP</name>
        <dbReference type="ChEBI" id="CHEBI:37565"/>
    </ligand>
</feature>
<feature type="binding site" evidence="1">
    <location>
        <begin position="411"/>
        <end position="413"/>
    </location>
    <ligand>
        <name>GTP</name>
        <dbReference type="ChEBI" id="CHEBI:37565"/>
    </ligand>
</feature>
<dbReference type="EC" id="6.3.4.4" evidence="1"/>
<dbReference type="EMBL" id="FM177140">
    <property type="protein sequence ID" value="CAQ65245.1"/>
    <property type="molecule type" value="Genomic_DNA"/>
</dbReference>
<dbReference type="SMR" id="B3W7G1"/>
<dbReference type="KEGG" id="lcb:LCABL_01130"/>
<dbReference type="HOGENOM" id="CLU_029848_0_0_9"/>
<dbReference type="UniPathway" id="UPA00075">
    <property type="reaction ID" value="UER00335"/>
</dbReference>
<dbReference type="GO" id="GO:0005737">
    <property type="term" value="C:cytoplasm"/>
    <property type="evidence" value="ECO:0007669"/>
    <property type="project" value="UniProtKB-SubCell"/>
</dbReference>
<dbReference type="GO" id="GO:0004019">
    <property type="term" value="F:adenylosuccinate synthase activity"/>
    <property type="evidence" value="ECO:0007669"/>
    <property type="project" value="UniProtKB-UniRule"/>
</dbReference>
<dbReference type="GO" id="GO:0005525">
    <property type="term" value="F:GTP binding"/>
    <property type="evidence" value="ECO:0007669"/>
    <property type="project" value="UniProtKB-UniRule"/>
</dbReference>
<dbReference type="GO" id="GO:0000287">
    <property type="term" value="F:magnesium ion binding"/>
    <property type="evidence" value="ECO:0007669"/>
    <property type="project" value="UniProtKB-UniRule"/>
</dbReference>
<dbReference type="GO" id="GO:0044208">
    <property type="term" value="P:'de novo' AMP biosynthetic process"/>
    <property type="evidence" value="ECO:0007669"/>
    <property type="project" value="UniProtKB-UniRule"/>
</dbReference>
<dbReference type="GO" id="GO:0046040">
    <property type="term" value="P:IMP metabolic process"/>
    <property type="evidence" value="ECO:0007669"/>
    <property type="project" value="TreeGrafter"/>
</dbReference>
<dbReference type="CDD" id="cd03108">
    <property type="entry name" value="AdSS"/>
    <property type="match status" value="1"/>
</dbReference>
<dbReference type="FunFam" id="1.10.300.10:FF:000001">
    <property type="entry name" value="Adenylosuccinate synthetase"/>
    <property type="match status" value="1"/>
</dbReference>
<dbReference type="FunFam" id="3.90.170.10:FF:000001">
    <property type="entry name" value="Adenylosuccinate synthetase"/>
    <property type="match status" value="1"/>
</dbReference>
<dbReference type="Gene3D" id="3.40.440.10">
    <property type="entry name" value="Adenylosuccinate Synthetase, subunit A, domain 1"/>
    <property type="match status" value="1"/>
</dbReference>
<dbReference type="Gene3D" id="1.10.300.10">
    <property type="entry name" value="Adenylosuccinate Synthetase, subunit A, domain 2"/>
    <property type="match status" value="1"/>
</dbReference>
<dbReference type="Gene3D" id="3.90.170.10">
    <property type="entry name" value="Adenylosuccinate Synthetase, subunit A, domain 3"/>
    <property type="match status" value="1"/>
</dbReference>
<dbReference type="HAMAP" id="MF_00011">
    <property type="entry name" value="Adenylosucc_synth"/>
    <property type="match status" value="1"/>
</dbReference>
<dbReference type="InterPro" id="IPR018220">
    <property type="entry name" value="Adenylosuccin_syn_GTP-bd"/>
</dbReference>
<dbReference type="InterPro" id="IPR033128">
    <property type="entry name" value="Adenylosuccin_syn_Lys_AS"/>
</dbReference>
<dbReference type="InterPro" id="IPR042109">
    <property type="entry name" value="Adenylosuccinate_synth_dom1"/>
</dbReference>
<dbReference type="InterPro" id="IPR042110">
    <property type="entry name" value="Adenylosuccinate_synth_dom2"/>
</dbReference>
<dbReference type="InterPro" id="IPR042111">
    <property type="entry name" value="Adenylosuccinate_synth_dom3"/>
</dbReference>
<dbReference type="InterPro" id="IPR001114">
    <property type="entry name" value="Adenylosuccinate_synthetase"/>
</dbReference>
<dbReference type="InterPro" id="IPR027417">
    <property type="entry name" value="P-loop_NTPase"/>
</dbReference>
<dbReference type="NCBIfam" id="NF002223">
    <property type="entry name" value="PRK01117.1"/>
    <property type="match status" value="1"/>
</dbReference>
<dbReference type="NCBIfam" id="TIGR00184">
    <property type="entry name" value="purA"/>
    <property type="match status" value="1"/>
</dbReference>
<dbReference type="PANTHER" id="PTHR11846">
    <property type="entry name" value="ADENYLOSUCCINATE SYNTHETASE"/>
    <property type="match status" value="1"/>
</dbReference>
<dbReference type="PANTHER" id="PTHR11846:SF0">
    <property type="entry name" value="ADENYLOSUCCINATE SYNTHETASE"/>
    <property type="match status" value="1"/>
</dbReference>
<dbReference type="Pfam" id="PF00709">
    <property type="entry name" value="Adenylsucc_synt"/>
    <property type="match status" value="1"/>
</dbReference>
<dbReference type="SMART" id="SM00788">
    <property type="entry name" value="Adenylsucc_synt"/>
    <property type="match status" value="1"/>
</dbReference>
<dbReference type="SUPFAM" id="SSF52540">
    <property type="entry name" value="P-loop containing nucleoside triphosphate hydrolases"/>
    <property type="match status" value="1"/>
</dbReference>
<dbReference type="PROSITE" id="PS01266">
    <property type="entry name" value="ADENYLOSUCCIN_SYN_1"/>
    <property type="match status" value="1"/>
</dbReference>
<dbReference type="PROSITE" id="PS00513">
    <property type="entry name" value="ADENYLOSUCCIN_SYN_2"/>
    <property type="match status" value="1"/>
</dbReference>
<evidence type="ECO:0000255" key="1">
    <source>
        <dbReference type="HAMAP-Rule" id="MF_00011"/>
    </source>
</evidence>
<sequence length="431" mass="47422">MGTVVIVGTQWGDEGKGKITDFLSQGAKVVSRYQGGDNAGHTIHANGEVYKLRLVPSGVLYPHQLSVIGNGVVVNPKSLVGELARLAEQGVTGENLRISDRAHVILPYHIKLDKLQEAAKGADKIGTTNRGIGPAYMDKAARVGIRMADLLDKEIFEERLKANLKAKNEEFVKVYDSTPMNFDDIFEEYYQYGQQLKQYVCDTSIVLNDAIDKSEHVLFEGAQGIMLDIDQGTYPFVTSSNPAGGVTVGAGVGASKIDRVVGVAKAYTSRVGDGPFPTELLDKTGDFIRNAGHEFGTVTGRPRRIGWFDAVVVRHSRRVAGITDLCLNSIDVLTGLDKVKICVAYERDGERVENYPASLKFLSECKPVYEELPGWQEDITKAKTLDDLPENARRYVERITELLGVDLLTFSVGPDRDQTNVLENVWDKVSR</sequence>
<gene>
    <name evidence="1" type="primary">purA</name>
    <name type="ordered locus">LCABL_01130</name>
</gene>
<keyword id="KW-0963">Cytoplasm</keyword>
<keyword id="KW-0342">GTP-binding</keyword>
<keyword id="KW-0436">Ligase</keyword>
<keyword id="KW-0460">Magnesium</keyword>
<keyword id="KW-0479">Metal-binding</keyword>
<keyword id="KW-0547">Nucleotide-binding</keyword>
<keyword id="KW-0658">Purine biosynthesis</keyword>
<protein>
    <recommendedName>
        <fullName evidence="1">Adenylosuccinate synthetase</fullName>
        <shortName evidence="1">AMPSase</shortName>
        <shortName evidence="1">AdSS</shortName>
        <ecNumber evidence="1">6.3.4.4</ecNumber>
    </recommendedName>
    <alternativeName>
        <fullName evidence="1">IMP--aspartate ligase</fullName>
    </alternativeName>
</protein>
<comment type="function">
    <text evidence="1">Plays an important role in the de novo pathway of purine nucleotide biosynthesis. Catalyzes the first committed step in the biosynthesis of AMP from IMP.</text>
</comment>
<comment type="catalytic activity">
    <reaction evidence="1">
        <text>IMP + L-aspartate + GTP = N(6)-(1,2-dicarboxyethyl)-AMP + GDP + phosphate + 2 H(+)</text>
        <dbReference type="Rhea" id="RHEA:15753"/>
        <dbReference type="ChEBI" id="CHEBI:15378"/>
        <dbReference type="ChEBI" id="CHEBI:29991"/>
        <dbReference type="ChEBI" id="CHEBI:37565"/>
        <dbReference type="ChEBI" id="CHEBI:43474"/>
        <dbReference type="ChEBI" id="CHEBI:57567"/>
        <dbReference type="ChEBI" id="CHEBI:58053"/>
        <dbReference type="ChEBI" id="CHEBI:58189"/>
        <dbReference type="EC" id="6.3.4.4"/>
    </reaction>
</comment>
<comment type="cofactor">
    <cofactor evidence="1">
        <name>Mg(2+)</name>
        <dbReference type="ChEBI" id="CHEBI:18420"/>
    </cofactor>
    <text evidence="1">Binds 1 Mg(2+) ion per subunit.</text>
</comment>
<comment type="pathway">
    <text evidence="1">Purine metabolism; AMP biosynthesis via de novo pathway; AMP from IMP: step 1/2.</text>
</comment>
<comment type="subunit">
    <text evidence="1">Homodimer.</text>
</comment>
<comment type="subcellular location">
    <subcellularLocation>
        <location evidence="1">Cytoplasm</location>
    </subcellularLocation>
</comment>
<comment type="similarity">
    <text evidence="1">Belongs to the adenylosuccinate synthetase family.</text>
</comment>
<proteinExistence type="inferred from homology"/>